<evidence type="ECO:0000255" key="1">
    <source>
        <dbReference type="HAMAP-Rule" id="MF_00387"/>
    </source>
</evidence>
<gene>
    <name evidence="1" type="primary">lpxA</name>
    <name type="ordered locus">Ping_2964</name>
</gene>
<proteinExistence type="inferred from homology"/>
<comment type="function">
    <text evidence="1">Involved in the biosynthesis of lipid A, a phosphorylated glycolipid that anchors the lipopolysaccharide to the outer membrane of the cell.</text>
</comment>
<comment type="catalytic activity">
    <reaction evidence="1">
        <text>a (3R)-hydroxyacyl-[ACP] + UDP-N-acetyl-alpha-D-glucosamine = a UDP-3-O-[(3R)-3-hydroxyacyl]-N-acetyl-alpha-D-glucosamine + holo-[ACP]</text>
        <dbReference type="Rhea" id="RHEA:67812"/>
        <dbReference type="Rhea" id="RHEA-COMP:9685"/>
        <dbReference type="Rhea" id="RHEA-COMP:9945"/>
        <dbReference type="ChEBI" id="CHEBI:57705"/>
        <dbReference type="ChEBI" id="CHEBI:64479"/>
        <dbReference type="ChEBI" id="CHEBI:78827"/>
        <dbReference type="ChEBI" id="CHEBI:173225"/>
        <dbReference type="EC" id="2.3.1.129"/>
    </reaction>
</comment>
<comment type="pathway">
    <text evidence="1">Glycolipid biosynthesis; lipid IV(A) biosynthesis; lipid IV(A) from (3R)-3-hydroxytetradecanoyl-[acyl-carrier-protein] and UDP-N-acetyl-alpha-D-glucosamine: step 1/6.</text>
</comment>
<comment type="subunit">
    <text evidence="1">Homotrimer.</text>
</comment>
<comment type="subcellular location">
    <subcellularLocation>
        <location evidence="1">Cytoplasm</location>
    </subcellularLocation>
</comment>
<comment type="similarity">
    <text evidence="1">Belongs to the transferase hexapeptide repeat family. LpxA subfamily.</text>
</comment>
<dbReference type="EC" id="2.3.1.129" evidence="1"/>
<dbReference type="EMBL" id="CP000510">
    <property type="protein sequence ID" value="ABM04666.1"/>
    <property type="molecule type" value="Genomic_DNA"/>
</dbReference>
<dbReference type="RefSeq" id="WP_011771220.1">
    <property type="nucleotide sequence ID" value="NC_008709.1"/>
</dbReference>
<dbReference type="SMR" id="A1SYV1"/>
<dbReference type="STRING" id="357804.Ping_2964"/>
<dbReference type="KEGG" id="pin:Ping_2964"/>
<dbReference type="eggNOG" id="COG1043">
    <property type="taxonomic scope" value="Bacteria"/>
</dbReference>
<dbReference type="HOGENOM" id="CLU_061249_0_0_6"/>
<dbReference type="OrthoDB" id="9807278at2"/>
<dbReference type="UniPathway" id="UPA00359">
    <property type="reaction ID" value="UER00477"/>
</dbReference>
<dbReference type="Proteomes" id="UP000000639">
    <property type="component" value="Chromosome"/>
</dbReference>
<dbReference type="GO" id="GO:0005737">
    <property type="term" value="C:cytoplasm"/>
    <property type="evidence" value="ECO:0007669"/>
    <property type="project" value="UniProtKB-SubCell"/>
</dbReference>
<dbReference type="GO" id="GO:0016020">
    <property type="term" value="C:membrane"/>
    <property type="evidence" value="ECO:0007669"/>
    <property type="project" value="GOC"/>
</dbReference>
<dbReference type="GO" id="GO:0008780">
    <property type="term" value="F:acyl-[acyl-carrier-protein]-UDP-N-acetylglucosamine O-acyltransferase activity"/>
    <property type="evidence" value="ECO:0007669"/>
    <property type="project" value="UniProtKB-UniRule"/>
</dbReference>
<dbReference type="GO" id="GO:0009245">
    <property type="term" value="P:lipid A biosynthetic process"/>
    <property type="evidence" value="ECO:0007669"/>
    <property type="project" value="UniProtKB-UniRule"/>
</dbReference>
<dbReference type="CDD" id="cd03351">
    <property type="entry name" value="LbH_UDP-GlcNAc_AT"/>
    <property type="match status" value="1"/>
</dbReference>
<dbReference type="Gene3D" id="2.160.10.10">
    <property type="entry name" value="Hexapeptide repeat proteins"/>
    <property type="match status" value="1"/>
</dbReference>
<dbReference type="Gene3D" id="1.20.1180.10">
    <property type="entry name" value="Udp N-acetylglucosamine O-acyltransferase, C-terminal domain"/>
    <property type="match status" value="1"/>
</dbReference>
<dbReference type="HAMAP" id="MF_00387">
    <property type="entry name" value="LpxA"/>
    <property type="match status" value="1"/>
</dbReference>
<dbReference type="InterPro" id="IPR029098">
    <property type="entry name" value="Acetyltransf_C"/>
</dbReference>
<dbReference type="InterPro" id="IPR037157">
    <property type="entry name" value="Acetyltransf_C_sf"/>
</dbReference>
<dbReference type="InterPro" id="IPR001451">
    <property type="entry name" value="Hexapep"/>
</dbReference>
<dbReference type="InterPro" id="IPR010137">
    <property type="entry name" value="Lipid_A_LpxA"/>
</dbReference>
<dbReference type="InterPro" id="IPR011004">
    <property type="entry name" value="Trimer_LpxA-like_sf"/>
</dbReference>
<dbReference type="NCBIfam" id="TIGR01852">
    <property type="entry name" value="lipid_A_lpxA"/>
    <property type="match status" value="1"/>
</dbReference>
<dbReference type="NCBIfam" id="NF003657">
    <property type="entry name" value="PRK05289.1"/>
    <property type="match status" value="1"/>
</dbReference>
<dbReference type="PANTHER" id="PTHR43480">
    <property type="entry name" value="ACYL-[ACYL-CARRIER-PROTEIN]--UDP-N-ACETYLGLUCOSAMINE O-ACYLTRANSFERASE"/>
    <property type="match status" value="1"/>
</dbReference>
<dbReference type="PANTHER" id="PTHR43480:SF1">
    <property type="entry name" value="ACYL-[ACYL-CARRIER-PROTEIN]--UDP-N-ACETYLGLUCOSAMINE O-ACYLTRANSFERASE, MITOCHONDRIAL-RELATED"/>
    <property type="match status" value="1"/>
</dbReference>
<dbReference type="Pfam" id="PF13720">
    <property type="entry name" value="Acetyltransf_11"/>
    <property type="match status" value="1"/>
</dbReference>
<dbReference type="Pfam" id="PF00132">
    <property type="entry name" value="Hexapep"/>
    <property type="match status" value="1"/>
</dbReference>
<dbReference type="PIRSF" id="PIRSF000456">
    <property type="entry name" value="UDP-GlcNAc_acltr"/>
    <property type="match status" value="1"/>
</dbReference>
<dbReference type="SUPFAM" id="SSF51161">
    <property type="entry name" value="Trimeric LpxA-like enzymes"/>
    <property type="match status" value="1"/>
</dbReference>
<organism>
    <name type="scientific">Psychromonas ingrahamii (strain DSM 17664 / CCUG 51855 / 37)</name>
    <dbReference type="NCBI Taxonomy" id="357804"/>
    <lineage>
        <taxon>Bacteria</taxon>
        <taxon>Pseudomonadati</taxon>
        <taxon>Pseudomonadota</taxon>
        <taxon>Gammaproteobacteria</taxon>
        <taxon>Alteromonadales</taxon>
        <taxon>Psychromonadaceae</taxon>
        <taxon>Psychromonas</taxon>
    </lineage>
</organism>
<reference key="1">
    <citation type="journal article" date="2008" name="BMC Genomics">
        <title>Genomics of an extreme psychrophile, Psychromonas ingrahamii.</title>
        <authorList>
            <person name="Riley M."/>
            <person name="Staley J.T."/>
            <person name="Danchin A."/>
            <person name="Wang T.Z."/>
            <person name="Brettin T.S."/>
            <person name="Hauser L.J."/>
            <person name="Land M.L."/>
            <person name="Thompson L.S."/>
        </authorList>
    </citation>
    <scope>NUCLEOTIDE SEQUENCE [LARGE SCALE GENOMIC DNA]</scope>
    <source>
        <strain>DSM 17664 / CCUG 51855 / 37</strain>
    </source>
</reference>
<accession>A1SYV1</accession>
<feature type="chain" id="PRO_0000302594" description="Acyl-[acyl-carrier-protein]--UDP-N-acetylglucosamine O-acyltransferase">
    <location>
        <begin position="1"/>
        <end position="262"/>
    </location>
</feature>
<name>LPXA_PSYIN</name>
<keyword id="KW-0012">Acyltransferase</keyword>
<keyword id="KW-0963">Cytoplasm</keyword>
<keyword id="KW-0441">Lipid A biosynthesis</keyword>
<keyword id="KW-0444">Lipid biosynthesis</keyword>
<keyword id="KW-0443">Lipid metabolism</keyword>
<keyword id="KW-1185">Reference proteome</keyword>
<keyword id="KW-0677">Repeat</keyword>
<keyword id="KW-0808">Transferase</keyword>
<sequence length="262" mass="28641">MTKKIAMIHPTAIVHENAIIGKDVEIGPYTIIGDRVEIGDNCWIAPHVVIKGPTKMGKGNKIYQFASIGEDCQDLKYNGEETFLEIGDNNVFRESCTVHRGTAQDQGTTRIGNNNLLMAYVHVAHDCVLGNNIILSNNATLAGHTKLANNVIIGGLSALHQFTRVGEFAMIGGCSAVNKDIPPYFMATGNYVEAQGVNSVGLKRSGFNSKAIMEIKRAYKILCREGNSLEQAKIKIAEKLEGCPELQVLYDFICEESRGIVR</sequence>
<protein>
    <recommendedName>
        <fullName evidence="1">Acyl-[acyl-carrier-protein]--UDP-N-acetylglucosamine O-acyltransferase</fullName>
        <shortName evidence="1">UDP-N-acetylglucosamine acyltransferase</shortName>
        <ecNumber evidence="1">2.3.1.129</ecNumber>
    </recommendedName>
</protein>